<proteinExistence type="predicted"/>
<dbReference type="EMBL" id="AJ854042">
    <property type="protein sequence ID" value="CAH69400.1"/>
    <property type="molecule type" value="Genomic_DNA"/>
</dbReference>
<dbReference type="RefSeq" id="YP_001496938.1">
    <property type="nucleotide sequence ID" value="NC_009884.1"/>
</dbReference>
<dbReference type="SMR" id="Q573F6"/>
<dbReference type="KEGG" id="vg:5656106"/>
<dbReference type="Proteomes" id="UP000006364">
    <property type="component" value="Genome"/>
</dbReference>
<accession>Q573F6</accession>
<reference key="1">
    <citation type="journal article" date="2005" name="J. Bacteriol.">
        <title>Structure and genome organization of AFV2, a novel archaeal lipothrixvirus with unusual terminal and core structures.</title>
        <authorList>
            <person name="Haring M."/>
            <person name="Vestergaard G."/>
            <person name="Brugger K."/>
            <person name="Rachel R."/>
            <person name="Garrett R.A."/>
            <person name="Prangishvili D."/>
        </authorList>
    </citation>
    <scope>NUCLEOTIDE SEQUENCE [GENOMIC DNA]</scope>
</reference>
<organism>
    <name type="scientific">Acidianus filamentous virus 2 (isolate Italy/Pozzuoli)</name>
    <name type="common">AFV-2</name>
    <dbReference type="NCBI Taxonomy" id="654910"/>
    <lineage>
        <taxon>Viruses</taxon>
        <taxon>Adnaviria</taxon>
        <taxon>Zilligvirae</taxon>
        <taxon>Taleaviricota</taxon>
        <taxon>Tokiviricetes</taxon>
        <taxon>Ligamenvirales</taxon>
        <taxon>Lipothrixviridae</taxon>
        <taxon>Deltalipothrixvirus</taxon>
        <taxon>Acidianus filamentous virus 2</taxon>
    </lineage>
</organism>
<gene>
    <name type="ORF">ORF48</name>
</gene>
<sequence length="48" mass="5641">MRKAIVCFTIDANEKSLLSQLAERENKSLSQYVREIVLDRMIEELNEN</sequence>
<keyword id="KW-1185">Reference proteome</keyword>
<name>Y048_AFV2P</name>
<organismHost>
    <name type="scientific">Acidianus sp. F28</name>
    <dbReference type="NCBI Taxonomy" id="315458"/>
</organismHost>
<protein>
    <recommendedName>
        <fullName>Uncharacterized protein ORF48</fullName>
    </recommendedName>
</protein>
<feature type="chain" id="PRO_0000384485" description="Uncharacterized protein ORF48">
    <location>
        <begin position="1"/>
        <end position="48"/>
    </location>
</feature>